<organism>
    <name type="scientific">Bovine herpesvirus 1.1 (strain Cooper)</name>
    <name type="common">BoHV-1</name>
    <name type="synonym">Infectious bovine rhinotracheitis virus</name>
    <dbReference type="NCBI Taxonomy" id="10323"/>
    <lineage>
        <taxon>Viruses</taxon>
        <taxon>Duplodnaviria</taxon>
        <taxon>Heunggongvirae</taxon>
        <taxon>Peploviricota</taxon>
        <taxon>Herviviricetes</taxon>
        <taxon>Herpesvirales</taxon>
        <taxon>Orthoherpesviridae</taxon>
        <taxon>Alphaherpesvirinae</taxon>
        <taxon>Varicellovirus</taxon>
        <taxon>Varicellovirus bovinealpha1</taxon>
    </lineage>
</organism>
<comment type="function">
    <text evidence="3">Envelope glycoprotein that binds to host cell entry receptors, promoting the virus entry into host cells. May trigger fusion with host membrane, by recruiting the fusion machinery composed of gB and gH/gL (By similarity).</text>
</comment>
<comment type="subcellular location">
    <subcellularLocation>
        <location evidence="3">Virion membrane</location>
        <topology evidence="3">Single-pass type I membrane protein</topology>
    </subcellularLocation>
    <text evidence="4">During virion morphogenesis, this protein probably accumulates in the endosomes and trans-Golgi where secondary envelopment occurs.</text>
</comment>
<comment type="similarity">
    <text evidence="7">Belongs to the herpesviridae glycoprotein D family.</text>
</comment>
<feature type="signal peptide" evidence="1">
    <location>
        <begin position="1"/>
        <end position="18"/>
    </location>
</feature>
<feature type="chain" id="PRO_0000414308" description="Envelope glycoprotein D">
    <location>
        <begin position="19"/>
        <end position="417"/>
    </location>
</feature>
<feature type="topological domain" description="Virion surface" evidence="5">
    <location>
        <begin position="19"/>
        <end position="360"/>
    </location>
</feature>
<feature type="transmembrane region" description="Helical" evidence="5">
    <location>
        <begin position="361"/>
        <end position="389"/>
    </location>
</feature>
<feature type="topological domain" description="Intravirion" evidence="5">
    <location>
        <begin position="390"/>
        <end position="417"/>
    </location>
</feature>
<feature type="region of interest" description="Disordered" evidence="6">
    <location>
        <begin position="259"/>
        <end position="356"/>
    </location>
</feature>
<feature type="compositionally biased region" description="Acidic residues" evidence="6">
    <location>
        <begin position="279"/>
        <end position="292"/>
    </location>
</feature>
<feature type="glycosylation site" description="N-linked (GlcNAc...) asparagine; by host" evidence="5">
    <location>
        <position position="41"/>
    </location>
</feature>
<feature type="glycosylation site" description="N-linked (GlcNAc...) asparagine; by host" evidence="5">
    <location>
        <position position="102"/>
    </location>
</feature>
<feature type="disulfide bond" evidence="2">
    <location>
        <begin position="75"/>
        <end position="197"/>
    </location>
</feature>
<feature type="disulfide bond" evidence="2">
    <location>
        <begin position="114"/>
        <end position="213"/>
    </location>
</feature>
<feature type="disulfide bond" evidence="2">
    <location>
        <begin position="126"/>
        <end position="135"/>
    </location>
</feature>
<keyword id="KW-1015">Disulfide bond</keyword>
<keyword id="KW-0325">Glycoprotein</keyword>
<keyword id="KW-0945">Host-virus interaction</keyword>
<keyword id="KW-0472">Membrane</keyword>
<keyword id="KW-0732">Signal</keyword>
<keyword id="KW-0812">Transmembrane</keyword>
<keyword id="KW-1133">Transmembrane helix</keyword>
<keyword id="KW-1161">Viral attachment to host cell</keyword>
<keyword id="KW-1234">Viral attachment to host entry receptor</keyword>
<keyword id="KW-0261">Viral envelope protein</keyword>
<keyword id="KW-0946">Virion</keyword>
<keyword id="KW-1160">Virus entry into host cell</keyword>
<proteinExistence type="inferred from homology"/>
<name>GD_BHV1C</name>
<reference key="1">
    <citation type="submission" date="1997-09" db="EMBL/GenBank/DDBJ databases">
        <title>Complete DNA sequence of bovine herpesvirus 1.</title>
        <authorList>
            <person name="Schwyzer M."/>
            <person name="Paces V."/>
            <person name="Letchworth G.J."/>
            <person name="Misra V."/>
            <person name="Buhk H.J."/>
            <person name="Lowery D.E."/>
            <person name="Simard C."/>
            <person name="Bello L.J."/>
            <person name="Thiry E."/>
            <person name="Vlcek C."/>
        </authorList>
    </citation>
    <scope>NUCLEOTIDE SEQUENCE [LARGE SCALE GENOMIC DNA]</scope>
</reference>
<sequence>MQGPTLAVLGALLAVAVSLPTPAPRVTVYVDPPAYPMPRYNYTERWHTTGPIPSPFADGREQPVEVRYATSAAACDMLALIADPQVGRTLWEAVRRHARAYNATVIWYKIESGCARPLYYMEYTECEPRKHFGYCRYRTPPFWDSFLAGFAYPTDDELGLIMAAPARLVEGQYRRALYIDGTVAYTDFMVSLPAGDCWFSKLGAARGYTFGACFPARDYEQKKVLRLTYLTQYYPQEAHKAIVDYWFMRHGGVVPPYFEESKGYEPPPAADGGSPAPPGDDEAREDEGETEDGAAGREGNGGPPGPEGDGESQTPEANGGAEGEPKPGPSPDADRPEGWPSLEAITHPPPAPATPAAPDAVPVSVGIGIAAAAIACVAAAAAGAYFVYTRRRGAGPLPRKPKKLPAFGNVNYSALPG</sequence>
<organismHost>
    <name type="scientific">Bos taurus</name>
    <name type="common">Bovine</name>
    <dbReference type="NCBI Taxonomy" id="9913"/>
</organismHost>
<dbReference type="EMBL" id="AJ004801">
    <property type="protein sequence ID" value="CAA06145.1"/>
    <property type="molecule type" value="Genomic_DNA"/>
</dbReference>
<dbReference type="RefSeq" id="NP_045370.1">
    <property type="nucleotide sequence ID" value="NC_001847.1"/>
</dbReference>
<dbReference type="SMR" id="P0CK30"/>
<dbReference type="GlyCosmos" id="P0CK30">
    <property type="glycosylation" value="2 sites, No reported glycans"/>
</dbReference>
<dbReference type="Proteomes" id="UP000202075">
    <property type="component" value="Segment"/>
</dbReference>
<dbReference type="GO" id="GO:0016020">
    <property type="term" value="C:membrane"/>
    <property type="evidence" value="ECO:0007669"/>
    <property type="project" value="UniProtKB-KW"/>
</dbReference>
<dbReference type="GO" id="GO:0019031">
    <property type="term" value="C:viral envelope"/>
    <property type="evidence" value="ECO:0007669"/>
    <property type="project" value="UniProtKB-KW"/>
</dbReference>
<dbReference type="GO" id="GO:0055036">
    <property type="term" value="C:virion membrane"/>
    <property type="evidence" value="ECO:0007669"/>
    <property type="project" value="UniProtKB-SubCell"/>
</dbReference>
<dbReference type="GO" id="GO:0098670">
    <property type="term" value="P:entry receptor-mediated virion attachment to host cell"/>
    <property type="evidence" value="ECO:0007669"/>
    <property type="project" value="UniProtKB-KW"/>
</dbReference>
<dbReference type="GO" id="GO:0046718">
    <property type="term" value="P:symbiont entry into host cell"/>
    <property type="evidence" value="ECO:0007669"/>
    <property type="project" value="UniProtKB-KW"/>
</dbReference>
<dbReference type="Gene3D" id="2.70.230.10">
    <property type="match status" value="1"/>
</dbReference>
<dbReference type="InterPro" id="IPR002896">
    <property type="entry name" value="Herpes_glycop_dom"/>
</dbReference>
<dbReference type="InterPro" id="IPR036179">
    <property type="entry name" value="Ig-like_dom_sf"/>
</dbReference>
<dbReference type="Pfam" id="PF01537">
    <property type="entry name" value="Herpes_glycop_D"/>
    <property type="match status" value="1"/>
</dbReference>
<dbReference type="SUPFAM" id="SSF48726">
    <property type="entry name" value="Immunoglobulin"/>
    <property type="match status" value="1"/>
</dbReference>
<evidence type="ECO:0000250" key="1"/>
<evidence type="ECO:0000250" key="2">
    <source>
        <dbReference type="UniProtKB" id="P57083"/>
    </source>
</evidence>
<evidence type="ECO:0000250" key="3">
    <source>
        <dbReference type="UniProtKB" id="Q05059"/>
    </source>
</evidence>
<evidence type="ECO:0000250" key="4">
    <source>
        <dbReference type="UniProtKB" id="Q69091"/>
    </source>
</evidence>
<evidence type="ECO:0000255" key="5"/>
<evidence type="ECO:0000256" key="6">
    <source>
        <dbReference type="SAM" id="MobiDB-lite"/>
    </source>
</evidence>
<evidence type="ECO:0000305" key="7"/>
<accession>P0CK30</accession>
<accession>P24906</accession>
<protein>
    <recommendedName>
        <fullName>Envelope glycoprotein D</fullName>
        <shortName>gD</shortName>
    </recommendedName>
    <alternativeName>
        <fullName>Glycoprotein IV</fullName>
    </alternativeName>
</protein>
<gene>
    <name type="primary">gD</name>
    <name type="synonym">gIV</name>
    <name type="synonym">US6</name>
</gene>